<accession>Q99181</accession>
<accession>D6W317</accession>
<proteinExistence type="evidence at protein level"/>
<reference key="1">
    <citation type="journal article" date="1996" name="Yeast">
        <title>Sequencing of a 35.71 kb DNA segment on the right arm of yeast chromosome XV reveals regions of similarity to chromosomes I and XIII.</title>
        <authorList>
            <person name="Pearson B.M."/>
            <person name="Hernando Y."/>
            <person name="Payne J."/>
            <person name="Wolf S.S."/>
            <person name="Kalogeropoulos A."/>
            <person name="Schweizer M."/>
        </authorList>
    </citation>
    <scope>NUCLEOTIDE SEQUENCE [GENOMIC DNA]</scope>
    <source>
        <strain>ATCC 96604 / S288c / FY1679</strain>
    </source>
</reference>
<reference key="2">
    <citation type="journal article" date="1997" name="Nature">
        <title>The nucleotide sequence of Saccharomyces cerevisiae chromosome XV.</title>
        <authorList>
            <person name="Dujon B."/>
            <person name="Albermann K."/>
            <person name="Aldea M."/>
            <person name="Alexandraki D."/>
            <person name="Ansorge W."/>
            <person name="Arino J."/>
            <person name="Benes V."/>
            <person name="Bohn C."/>
            <person name="Bolotin-Fukuhara M."/>
            <person name="Bordonne R."/>
            <person name="Boyer J."/>
            <person name="Camasses A."/>
            <person name="Casamayor A."/>
            <person name="Casas C."/>
            <person name="Cheret G."/>
            <person name="Cziepluch C."/>
            <person name="Daignan-Fornier B."/>
            <person name="Dang V.-D."/>
            <person name="de Haan M."/>
            <person name="Delius H."/>
            <person name="Durand P."/>
            <person name="Fairhead C."/>
            <person name="Feldmann H."/>
            <person name="Gaillon L."/>
            <person name="Galisson F."/>
            <person name="Gamo F.-J."/>
            <person name="Gancedo C."/>
            <person name="Goffeau A."/>
            <person name="Goulding S.E."/>
            <person name="Grivell L.A."/>
            <person name="Habbig B."/>
            <person name="Hand N.J."/>
            <person name="Hani J."/>
            <person name="Hattenhorst U."/>
            <person name="Hebling U."/>
            <person name="Hernando Y."/>
            <person name="Herrero E."/>
            <person name="Heumann K."/>
            <person name="Hiesel R."/>
            <person name="Hilger F."/>
            <person name="Hofmann B."/>
            <person name="Hollenberg C.P."/>
            <person name="Hughes B."/>
            <person name="Jauniaux J.-C."/>
            <person name="Kalogeropoulos A."/>
            <person name="Katsoulou C."/>
            <person name="Kordes E."/>
            <person name="Lafuente M.J."/>
            <person name="Landt O."/>
            <person name="Louis E.J."/>
            <person name="Maarse A.C."/>
            <person name="Madania A."/>
            <person name="Mannhaupt G."/>
            <person name="Marck C."/>
            <person name="Martin R.P."/>
            <person name="Mewes H.-W."/>
            <person name="Michaux G."/>
            <person name="Paces V."/>
            <person name="Parle-McDermott A.G."/>
            <person name="Pearson B.M."/>
            <person name="Perrin A."/>
            <person name="Pettersson B."/>
            <person name="Poch O."/>
            <person name="Pohl T.M."/>
            <person name="Poirey R."/>
            <person name="Portetelle D."/>
            <person name="Pujol A."/>
            <person name="Purnelle B."/>
            <person name="Ramezani Rad M."/>
            <person name="Rechmann S."/>
            <person name="Schwager C."/>
            <person name="Schweizer M."/>
            <person name="Sor F."/>
            <person name="Sterky F."/>
            <person name="Tarassov I.A."/>
            <person name="Teodoru C."/>
            <person name="Tettelin H."/>
            <person name="Thierry A."/>
            <person name="Tobiasch E."/>
            <person name="Tzermia M."/>
            <person name="Uhlen M."/>
            <person name="Unseld M."/>
            <person name="Valens M."/>
            <person name="Vandenbol M."/>
            <person name="Vetter I."/>
            <person name="Vlcek C."/>
            <person name="Voet M."/>
            <person name="Volckaert G."/>
            <person name="Voss H."/>
            <person name="Wambutt R."/>
            <person name="Wedler H."/>
            <person name="Wiemann S."/>
            <person name="Winsor B."/>
            <person name="Wolfe K.H."/>
            <person name="Zollner A."/>
            <person name="Zumstein E."/>
            <person name="Kleine K."/>
        </authorList>
    </citation>
    <scope>NUCLEOTIDE SEQUENCE [LARGE SCALE GENOMIC DNA]</scope>
    <source>
        <strain>ATCC 204508 / S288c</strain>
    </source>
</reference>
<reference key="3">
    <citation type="journal article" date="2014" name="G3 (Bethesda)">
        <title>The reference genome sequence of Saccharomyces cerevisiae: Then and now.</title>
        <authorList>
            <person name="Engel S.R."/>
            <person name="Dietrich F.S."/>
            <person name="Fisk D.G."/>
            <person name="Binkley G."/>
            <person name="Balakrishnan R."/>
            <person name="Costanzo M.C."/>
            <person name="Dwight S.S."/>
            <person name="Hitz B.C."/>
            <person name="Karra K."/>
            <person name="Nash R.S."/>
            <person name="Weng S."/>
            <person name="Wong E.D."/>
            <person name="Lloyd P."/>
            <person name="Skrzypek M.S."/>
            <person name="Miyasato S.R."/>
            <person name="Simison M."/>
            <person name="Cherry J.M."/>
        </authorList>
    </citation>
    <scope>GENOME REANNOTATION</scope>
    <source>
        <strain>ATCC 204508 / S288c</strain>
    </source>
</reference>
<reference key="4">
    <citation type="journal article" date="2007" name="Genome Res.">
        <title>Approaching a complete repository of sequence-verified protein-encoding clones for Saccharomyces cerevisiae.</title>
        <authorList>
            <person name="Hu Y."/>
            <person name="Rolfs A."/>
            <person name="Bhullar B."/>
            <person name="Murthy T.V.S."/>
            <person name="Zhu C."/>
            <person name="Berger M.F."/>
            <person name="Camargo A.A."/>
            <person name="Kelley F."/>
            <person name="McCarron S."/>
            <person name="Jepson D."/>
            <person name="Richardson A."/>
            <person name="Raphael J."/>
            <person name="Moreira D."/>
            <person name="Taycher E."/>
            <person name="Zuo D."/>
            <person name="Mohr S."/>
            <person name="Kane M.F."/>
            <person name="Williamson J."/>
            <person name="Simpson A.J.G."/>
            <person name="Bulyk M.L."/>
            <person name="Harlow E."/>
            <person name="Marsischky G."/>
            <person name="Kolodner R.D."/>
            <person name="LaBaer J."/>
        </authorList>
    </citation>
    <scope>NUCLEOTIDE SEQUENCE [GENOMIC DNA]</scope>
    <source>
        <strain>ATCC 204508 / S288c</strain>
    </source>
</reference>
<reference key="5">
    <citation type="journal article" date="2003" name="Mol. Cell. Biol.">
        <title>Rds3p is required for stable U2 snRNP recruitment to the splicing apparatus.</title>
        <authorList>
            <person name="Wang Q."/>
            <person name="Rymond B.C."/>
        </authorList>
    </citation>
    <scope>INTERACTION WITH RDS3</scope>
</reference>
<reference key="6">
    <citation type="journal article" date="2003" name="Nature">
        <title>Global analysis of protein expression in yeast.</title>
        <authorList>
            <person name="Ghaemmaghami S."/>
            <person name="Huh W.-K."/>
            <person name="Bower K."/>
            <person name="Howson R.W."/>
            <person name="Belle A."/>
            <person name="Dephoure N."/>
            <person name="O'Shea E.K."/>
            <person name="Weissman J.S."/>
        </authorList>
    </citation>
    <scope>LEVEL OF PROTEIN EXPRESSION [LARGE SCALE ANALYSIS]</scope>
</reference>
<name>HSH49_YEAST</name>
<keyword id="KW-0002">3D-structure</keyword>
<keyword id="KW-0507">mRNA processing</keyword>
<keyword id="KW-0539">Nucleus</keyword>
<keyword id="KW-1185">Reference proteome</keyword>
<keyword id="KW-0677">Repeat</keyword>
<keyword id="KW-0694">RNA-binding</keyword>
<sequence length="213" mass="24503">MNYSADSGNTVYVGNIDPRITKEQLYELFIQINPVLRIKYPKDKVLQAYQGYAFIEFYNQGDAQYAIKIMNNTVRLYDRLIKVRQVTNSTGTTNLPSNISKDMILPIAKLFIKNLADSIDSDQLVKIFNKFGKLIREPEIFYLSNGKLKCAYVYFEDFEKADLAIKSLNNQLVANNRITVDYAFKENGKGNAKYGDDVDRLLNKEALKHNMLK</sequence>
<organism>
    <name type="scientific">Saccharomyces cerevisiae (strain ATCC 204508 / S288c)</name>
    <name type="common">Baker's yeast</name>
    <dbReference type="NCBI Taxonomy" id="559292"/>
    <lineage>
        <taxon>Eukaryota</taxon>
        <taxon>Fungi</taxon>
        <taxon>Dikarya</taxon>
        <taxon>Ascomycota</taxon>
        <taxon>Saccharomycotina</taxon>
        <taxon>Saccharomycetes</taxon>
        <taxon>Saccharomycetales</taxon>
        <taxon>Saccharomycetaceae</taxon>
        <taxon>Saccharomyces</taxon>
    </lineage>
</organism>
<feature type="chain" id="PRO_0000081613" description="Protein HSH49">
    <location>
        <begin position="1"/>
        <end position="213"/>
    </location>
</feature>
<feature type="domain" description="RRM 1" evidence="1">
    <location>
        <begin position="9"/>
        <end position="88"/>
    </location>
</feature>
<feature type="domain" description="RRM 2" evidence="1">
    <location>
        <begin position="108"/>
        <end position="185"/>
    </location>
</feature>
<feature type="strand" evidence="6">
    <location>
        <begin position="10"/>
        <end position="14"/>
    </location>
</feature>
<feature type="helix" evidence="6">
    <location>
        <begin position="22"/>
        <end position="29"/>
    </location>
</feature>
<feature type="turn" evidence="6">
    <location>
        <begin position="30"/>
        <end position="32"/>
    </location>
</feature>
<feature type="strand" evidence="6">
    <location>
        <begin position="35"/>
        <end position="39"/>
    </location>
</feature>
<feature type="turn" evidence="6">
    <location>
        <begin position="44"/>
        <end position="47"/>
    </location>
</feature>
<feature type="strand" evidence="6">
    <location>
        <begin position="51"/>
        <end position="59"/>
    </location>
</feature>
<feature type="helix" evidence="6">
    <location>
        <begin position="60"/>
        <end position="70"/>
    </location>
</feature>
<feature type="turn" evidence="6">
    <location>
        <begin position="71"/>
        <end position="73"/>
    </location>
</feature>
<feature type="strand" evidence="6">
    <location>
        <begin position="82"/>
        <end position="85"/>
    </location>
</feature>
<feature type="strand" evidence="5">
    <location>
        <begin position="108"/>
        <end position="113"/>
    </location>
</feature>
<feature type="helix" evidence="5">
    <location>
        <begin position="121"/>
        <end position="129"/>
    </location>
</feature>
<feature type="strand" evidence="5">
    <location>
        <begin position="134"/>
        <end position="136"/>
    </location>
</feature>
<feature type="strand" evidence="5">
    <location>
        <begin position="139"/>
        <end position="143"/>
    </location>
</feature>
<feature type="strand" evidence="5">
    <location>
        <begin position="148"/>
        <end position="156"/>
    </location>
</feature>
<feature type="helix" evidence="5">
    <location>
        <begin position="158"/>
        <end position="168"/>
    </location>
</feature>
<feature type="strand" evidence="5">
    <location>
        <begin position="171"/>
        <end position="173"/>
    </location>
</feature>
<feature type="strand" evidence="5">
    <location>
        <begin position="176"/>
        <end position="182"/>
    </location>
</feature>
<feature type="turn" evidence="5">
    <location>
        <begin position="192"/>
        <end position="195"/>
    </location>
</feature>
<feature type="helix" evidence="5">
    <location>
        <begin position="196"/>
        <end position="202"/>
    </location>
</feature>
<evidence type="ECO:0000255" key="1">
    <source>
        <dbReference type="PROSITE-ProRule" id="PRU00176"/>
    </source>
</evidence>
<evidence type="ECO:0000269" key="2">
    <source>
    </source>
</evidence>
<evidence type="ECO:0000269" key="3">
    <source>
    </source>
</evidence>
<evidence type="ECO:0000305" key="4"/>
<evidence type="ECO:0007829" key="5">
    <source>
        <dbReference type="PDB" id="5LSB"/>
    </source>
</evidence>
<evidence type="ECO:0007829" key="6">
    <source>
        <dbReference type="PDB" id="5LSL"/>
    </source>
</evidence>
<protein>
    <recommendedName>
        <fullName>Protein HSH49</fullName>
    </recommendedName>
</protein>
<comment type="function">
    <text>Possible SF3b-like factor.</text>
</comment>
<comment type="subunit">
    <text evidence="2">Interacts with RDS3.</text>
</comment>
<comment type="interaction">
    <interactant intactId="EBI-8579">
        <id>Q99181</id>
    </interactant>
    <interactant intactId="EBI-654">
        <id>Q02554</id>
        <label>CUS1</label>
    </interactant>
    <organismsDiffer>false</organismsDiffer>
    <experiments>7</experiments>
</comment>
<comment type="interaction">
    <interactant intactId="EBI-8579">
        <id>Q99181</id>
    </interactant>
    <interactant intactId="EBI-313">
        <id>P47093</id>
        <label>LSM8</label>
    </interactant>
    <organismsDiffer>false</organismsDiffer>
    <experiments>3</experiments>
</comment>
<comment type="subcellular location">
    <subcellularLocation>
        <location evidence="4">Nucleus</location>
    </subcellularLocation>
</comment>
<comment type="miscellaneous">
    <text evidence="3">Present with 1240 molecules/cell in log phase SD medium.</text>
</comment>
<gene>
    <name type="primary">HSH49</name>
    <name type="ordered locus">YOR319W</name>
    <name type="ORF">O6142</name>
</gene>
<dbReference type="EMBL" id="Z75227">
    <property type="protein sequence ID" value="CAA99639.1"/>
    <property type="molecule type" value="Genomic_DNA"/>
</dbReference>
<dbReference type="EMBL" id="X90565">
    <property type="protein sequence ID" value="CAA62174.1"/>
    <property type="molecule type" value="Genomic_DNA"/>
</dbReference>
<dbReference type="EMBL" id="AY558437">
    <property type="protein sequence ID" value="AAS56763.1"/>
    <property type="molecule type" value="Genomic_DNA"/>
</dbReference>
<dbReference type="EMBL" id="BK006948">
    <property type="protein sequence ID" value="DAA11083.1"/>
    <property type="molecule type" value="Genomic_DNA"/>
</dbReference>
<dbReference type="PIR" id="S58329">
    <property type="entry name" value="S58329"/>
</dbReference>
<dbReference type="RefSeq" id="NP_014964.1">
    <property type="nucleotide sequence ID" value="NM_001183739.1"/>
</dbReference>
<dbReference type="PDB" id="5GM6">
    <property type="method" value="EM"/>
    <property type="resolution" value="3.50 A"/>
    <property type="chains" value="e=1-213"/>
</dbReference>
<dbReference type="PDB" id="5LSB">
    <property type="method" value="X-ray"/>
    <property type="resolution" value="2.70 A"/>
    <property type="chains" value="A/C/F=2-213"/>
</dbReference>
<dbReference type="PDB" id="5LSL">
    <property type="method" value="X-ray"/>
    <property type="resolution" value="1.65 A"/>
    <property type="chains" value="A/B/C/D=2-100"/>
</dbReference>
<dbReference type="PDB" id="5NRL">
    <property type="method" value="EM"/>
    <property type="resolution" value="7.20 A"/>
    <property type="chains" value="R=1-213"/>
</dbReference>
<dbReference type="PDB" id="5ZWM">
    <property type="method" value="EM"/>
    <property type="resolution" value="3.40 A"/>
    <property type="chains" value="4=1-213"/>
</dbReference>
<dbReference type="PDB" id="5ZWO">
    <property type="method" value="EM"/>
    <property type="resolution" value="3.90 A"/>
    <property type="chains" value="4=1-213"/>
</dbReference>
<dbReference type="PDB" id="6G90">
    <property type="method" value="EM"/>
    <property type="resolution" value="4.00 A"/>
    <property type="chains" value="R=1-213"/>
</dbReference>
<dbReference type="PDB" id="7OQB">
    <property type="method" value="EM"/>
    <property type="resolution" value="9.00 A"/>
    <property type="chains" value="R=1-213"/>
</dbReference>
<dbReference type="PDB" id="7OQE">
    <property type="method" value="EM"/>
    <property type="resolution" value="5.90 A"/>
    <property type="chains" value="R=1-213"/>
</dbReference>
<dbReference type="PDBsum" id="5GM6"/>
<dbReference type="PDBsum" id="5LSB"/>
<dbReference type="PDBsum" id="5LSL"/>
<dbReference type="PDBsum" id="5NRL"/>
<dbReference type="PDBsum" id="5ZWM"/>
<dbReference type="PDBsum" id="5ZWO"/>
<dbReference type="PDBsum" id="6G90"/>
<dbReference type="PDBsum" id="7OQB"/>
<dbReference type="PDBsum" id="7OQE"/>
<dbReference type="EMDB" id="EMD-13028"/>
<dbReference type="EMDB" id="EMD-13033"/>
<dbReference type="EMDB" id="EMD-3683"/>
<dbReference type="EMDB" id="EMD-4364"/>
<dbReference type="EMDB" id="EMD-6972"/>
<dbReference type="EMDB" id="EMD-6974"/>
<dbReference type="EMDB" id="EMD-9524"/>
<dbReference type="SMR" id="Q99181"/>
<dbReference type="BioGRID" id="34705">
    <property type="interactions" value="220"/>
</dbReference>
<dbReference type="ComplexPortal" id="CPX-1647">
    <property type="entry name" value="SF3B complex"/>
</dbReference>
<dbReference type="ComplexPortal" id="CPX-26">
    <property type="entry name" value="U2 small nuclear ribonucleoprotein complex"/>
</dbReference>
<dbReference type="DIP" id="DIP-930N"/>
<dbReference type="FunCoup" id="Q99181">
    <property type="interactions" value="482"/>
</dbReference>
<dbReference type="IntAct" id="Q99181">
    <property type="interactions" value="67"/>
</dbReference>
<dbReference type="MINT" id="Q99181"/>
<dbReference type="STRING" id="4932.YOR319W"/>
<dbReference type="CarbonylDB" id="Q99181"/>
<dbReference type="PaxDb" id="4932-YOR319W"/>
<dbReference type="PeptideAtlas" id="Q99181"/>
<dbReference type="EnsemblFungi" id="YOR319W_mRNA">
    <property type="protein sequence ID" value="YOR319W"/>
    <property type="gene ID" value="YOR319W"/>
</dbReference>
<dbReference type="GeneID" id="854497"/>
<dbReference type="KEGG" id="sce:YOR319W"/>
<dbReference type="AGR" id="SGD:S000005846"/>
<dbReference type="SGD" id="S000005846">
    <property type="gene designation" value="HSH49"/>
</dbReference>
<dbReference type="VEuPathDB" id="FungiDB:YOR319W"/>
<dbReference type="eggNOG" id="KOG0131">
    <property type="taxonomic scope" value="Eukaryota"/>
</dbReference>
<dbReference type="GeneTree" id="ENSGT00870000136537"/>
<dbReference type="HOGENOM" id="CLU_012062_21_2_1"/>
<dbReference type="InParanoid" id="Q99181"/>
<dbReference type="OMA" id="VIRDMDQ"/>
<dbReference type="OrthoDB" id="10259687at2759"/>
<dbReference type="BioCyc" id="YEAST:G3O-33799-MONOMER"/>
<dbReference type="BioGRID-ORCS" id="854497">
    <property type="hits" value="0 hits in 10 CRISPR screens"/>
</dbReference>
<dbReference type="PRO" id="PR:Q99181"/>
<dbReference type="Proteomes" id="UP000002311">
    <property type="component" value="Chromosome XV"/>
</dbReference>
<dbReference type="RNAct" id="Q99181">
    <property type="molecule type" value="protein"/>
</dbReference>
<dbReference type="GO" id="GO:0005634">
    <property type="term" value="C:nucleus"/>
    <property type="evidence" value="ECO:0000303"/>
    <property type="project" value="ComplexPortal"/>
</dbReference>
<dbReference type="GO" id="GO:0005681">
    <property type="term" value="C:spliceosomal complex"/>
    <property type="evidence" value="ECO:0000303"/>
    <property type="project" value="ComplexPortal"/>
</dbReference>
<dbReference type="GO" id="GO:0005686">
    <property type="term" value="C:U2 snRNP"/>
    <property type="evidence" value="ECO:0000314"/>
    <property type="project" value="SGD"/>
</dbReference>
<dbReference type="GO" id="GO:0071004">
    <property type="term" value="C:U2-type prespliceosome"/>
    <property type="evidence" value="ECO:0000314"/>
    <property type="project" value="SGD"/>
</dbReference>
<dbReference type="GO" id="GO:0005684">
    <property type="term" value="C:U2-type spliceosomal complex"/>
    <property type="evidence" value="ECO:0000353"/>
    <property type="project" value="ComplexPortal"/>
</dbReference>
<dbReference type="GO" id="GO:0003723">
    <property type="term" value="F:RNA binding"/>
    <property type="evidence" value="ECO:0000314"/>
    <property type="project" value="SGD"/>
</dbReference>
<dbReference type="GO" id="GO:0000398">
    <property type="term" value="P:mRNA splicing, via spliceosome"/>
    <property type="evidence" value="ECO:0000315"/>
    <property type="project" value="SGD"/>
</dbReference>
<dbReference type="GO" id="GO:1903241">
    <property type="term" value="P:U2-type prespliceosome assembly"/>
    <property type="evidence" value="ECO:0000303"/>
    <property type="project" value="ComplexPortal"/>
</dbReference>
<dbReference type="CDD" id="cd12334">
    <property type="entry name" value="RRM1_SF3B4"/>
    <property type="match status" value="1"/>
</dbReference>
<dbReference type="FunFam" id="3.30.70.330:FF:000895">
    <property type="entry name" value="Hsh49p"/>
    <property type="match status" value="1"/>
</dbReference>
<dbReference type="Gene3D" id="3.30.70.330">
    <property type="match status" value="2"/>
</dbReference>
<dbReference type="InterPro" id="IPR012677">
    <property type="entry name" value="Nucleotide-bd_a/b_plait_sf"/>
</dbReference>
<dbReference type="InterPro" id="IPR035979">
    <property type="entry name" value="RBD_domain_sf"/>
</dbReference>
<dbReference type="InterPro" id="IPR000504">
    <property type="entry name" value="RRM_dom"/>
</dbReference>
<dbReference type="InterPro" id="IPR034158">
    <property type="entry name" value="SF3B4_RRM1"/>
</dbReference>
<dbReference type="InterPro" id="IPR052084">
    <property type="entry name" value="SF3B4_spliceosome_assoc"/>
</dbReference>
<dbReference type="PANTHER" id="PTHR48030">
    <property type="entry name" value="SPLICING FACTOR 3B SUBUNIT 4"/>
    <property type="match status" value="1"/>
</dbReference>
<dbReference type="PANTHER" id="PTHR48030:SF3">
    <property type="entry name" value="SPLICING FACTOR 3B SUBUNIT 4"/>
    <property type="match status" value="1"/>
</dbReference>
<dbReference type="Pfam" id="PF00076">
    <property type="entry name" value="RRM_1"/>
    <property type="match status" value="2"/>
</dbReference>
<dbReference type="SMART" id="SM00360">
    <property type="entry name" value="RRM"/>
    <property type="match status" value="2"/>
</dbReference>
<dbReference type="SUPFAM" id="SSF54928">
    <property type="entry name" value="RNA-binding domain, RBD"/>
    <property type="match status" value="1"/>
</dbReference>
<dbReference type="PROSITE" id="PS50102">
    <property type="entry name" value="RRM"/>
    <property type="match status" value="2"/>
</dbReference>